<comment type="catalytic activity">
    <reaction>
        <text>L-citrulline + L-aspartate + ATP = 2-(N(omega)-L-arginino)succinate + AMP + diphosphate + H(+)</text>
        <dbReference type="Rhea" id="RHEA:10932"/>
        <dbReference type="ChEBI" id="CHEBI:15378"/>
        <dbReference type="ChEBI" id="CHEBI:29991"/>
        <dbReference type="ChEBI" id="CHEBI:30616"/>
        <dbReference type="ChEBI" id="CHEBI:33019"/>
        <dbReference type="ChEBI" id="CHEBI:57472"/>
        <dbReference type="ChEBI" id="CHEBI:57743"/>
        <dbReference type="ChEBI" id="CHEBI:456215"/>
        <dbReference type="EC" id="6.3.4.5"/>
    </reaction>
</comment>
<comment type="pathway">
    <text>Amino-acid biosynthesis; L-arginine biosynthesis; L-arginine from L-ornithine and carbamoyl phosphate: step 2/3.</text>
</comment>
<comment type="subunit">
    <text>Homotetramer.</text>
</comment>
<comment type="subcellular location">
    <subcellularLocation>
        <location evidence="1">Cytoplasm</location>
    </subcellularLocation>
</comment>
<comment type="similarity">
    <text evidence="4">Belongs to the argininosuccinate synthase family. Type 2 subfamily.</text>
</comment>
<dbReference type="EC" id="6.3.4.5"/>
<dbReference type="EMBL" id="D10691">
    <property type="protein sequence ID" value="BAA01533.1"/>
    <property type="molecule type" value="Genomic_DNA"/>
</dbReference>
<dbReference type="PIR" id="JN0506">
    <property type="entry name" value="JN0506"/>
</dbReference>
<dbReference type="RefSeq" id="WP_030230241.1">
    <property type="nucleotide sequence ID" value="NZ_JBIVYC010000009.1"/>
</dbReference>
<dbReference type="SMR" id="Q06734"/>
<dbReference type="GeneID" id="49388065"/>
<dbReference type="UniPathway" id="UPA00068">
    <property type="reaction ID" value="UER00113"/>
</dbReference>
<dbReference type="GO" id="GO:0005737">
    <property type="term" value="C:cytoplasm"/>
    <property type="evidence" value="ECO:0007669"/>
    <property type="project" value="UniProtKB-SubCell"/>
</dbReference>
<dbReference type="GO" id="GO:0004055">
    <property type="term" value="F:argininosuccinate synthase activity"/>
    <property type="evidence" value="ECO:0007669"/>
    <property type="project" value="UniProtKB-UniRule"/>
</dbReference>
<dbReference type="GO" id="GO:0005524">
    <property type="term" value="F:ATP binding"/>
    <property type="evidence" value="ECO:0007669"/>
    <property type="project" value="UniProtKB-UniRule"/>
</dbReference>
<dbReference type="GO" id="GO:0042803">
    <property type="term" value="F:protein homodimerization activity"/>
    <property type="evidence" value="ECO:0007669"/>
    <property type="project" value="InterPro"/>
</dbReference>
<dbReference type="GO" id="GO:0000053">
    <property type="term" value="P:argininosuccinate metabolic process"/>
    <property type="evidence" value="ECO:0007669"/>
    <property type="project" value="TreeGrafter"/>
</dbReference>
<dbReference type="GO" id="GO:0006526">
    <property type="term" value="P:L-arginine biosynthetic process"/>
    <property type="evidence" value="ECO:0007669"/>
    <property type="project" value="UniProtKB-UniRule"/>
</dbReference>
<dbReference type="GO" id="GO:0000050">
    <property type="term" value="P:urea cycle"/>
    <property type="evidence" value="ECO:0007669"/>
    <property type="project" value="TreeGrafter"/>
</dbReference>
<dbReference type="CDD" id="cd01999">
    <property type="entry name" value="ASS"/>
    <property type="match status" value="1"/>
</dbReference>
<dbReference type="Gene3D" id="1.10.287.400">
    <property type="match status" value="1"/>
</dbReference>
<dbReference type="Gene3D" id="3.90.1260.10">
    <property type="entry name" value="Argininosuccinate synthetase, chain A, domain 2"/>
    <property type="match status" value="1"/>
</dbReference>
<dbReference type="Gene3D" id="3.40.50.620">
    <property type="entry name" value="HUPs"/>
    <property type="match status" value="1"/>
</dbReference>
<dbReference type="HAMAP" id="MF_00581">
    <property type="entry name" value="Arg_succ_synth_type2"/>
    <property type="match status" value="1"/>
</dbReference>
<dbReference type="InterPro" id="IPR023437">
    <property type="entry name" value="Arg_succ_synth_type2_subfam"/>
</dbReference>
<dbReference type="InterPro" id="IPR048268">
    <property type="entry name" value="Arginosuc_syn_C"/>
</dbReference>
<dbReference type="InterPro" id="IPR048267">
    <property type="entry name" value="Arginosuc_syn_N"/>
</dbReference>
<dbReference type="InterPro" id="IPR001518">
    <property type="entry name" value="Arginosuc_synth"/>
</dbReference>
<dbReference type="InterPro" id="IPR018223">
    <property type="entry name" value="Arginosuc_synth_CS"/>
</dbReference>
<dbReference type="InterPro" id="IPR023434">
    <property type="entry name" value="Arginosuc_synth_type_1_subfam"/>
</dbReference>
<dbReference type="InterPro" id="IPR024074">
    <property type="entry name" value="AS_cat/multimer_dom_body"/>
</dbReference>
<dbReference type="InterPro" id="IPR024073">
    <property type="entry name" value="AS_multimer_C_tail"/>
</dbReference>
<dbReference type="InterPro" id="IPR014729">
    <property type="entry name" value="Rossmann-like_a/b/a_fold"/>
</dbReference>
<dbReference type="NCBIfam" id="TIGR00032">
    <property type="entry name" value="argG"/>
    <property type="match status" value="1"/>
</dbReference>
<dbReference type="NCBIfam" id="NF003779">
    <property type="entry name" value="PRK05370.1"/>
    <property type="match status" value="1"/>
</dbReference>
<dbReference type="PANTHER" id="PTHR11587">
    <property type="entry name" value="ARGININOSUCCINATE SYNTHASE"/>
    <property type="match status" value="1"/>
</dbReference>
<dbReference type="PANTHER" id="PTHR11587:SF2">
    <property type="entry name" value="ARGININOSUCCINATE SYNTHASE"/>
    <property type="match status" value="1"/>
</dbReference>
<dbReference type="Pfam" id="PF20979">
    <property type="entry name" value="Arginosuc_syn_C"/>
    <property type="match status" value="1"/>
</dbReference>
<dbReference type="Pfam" id="PF00764">
    <property type="entry name" value="Arginosuc_synth"/>
    <property type="match status" value="1"/>
</dbReference>
<dbReference type="SUPFAM" id="SSF52402">
    <property type="entry name" value="Adenine nucleotide alpha hydrolases-like"/>
    <property type="match status" value="1"/>
</dbReference>
<dbReference type="SUPFAM" id="SSF69864">
    <property type="entry name" value="Argininosuccinate synthetase, C-terminal domain"/>
    <property type="match status" value="1"/>
</dbReference>
<dbReference type="PROSITE" id="PS00564">
    <property type="entry name" value="ARGININOSUCCIN_SYN_1"/>
    <property type="match status" value="1"/>
</dbReference>
<dbReference type="PROSITE" id="PS00565">
    <property type="entry name" value="ARGININOSUCCIN_SYN_2"/>
    <property type="match status" value="1"/>
</dbReference>
<sequence>MSKVLTSLPAGERVGIAFSGGLDTSVAVAWMRDKGAVPCTYTADIGQYDEPDIASVPSRASAYGAEITRLVDCRAALVEEGLAALACGAFHIRSGGRPYFNTTPLGRAVTGTLLVRAMLEDGVQIWGDGSTFKGNDIERFYRYGLLANPHLRIYKPWLDADFVTELGGRKEMSEWLLAHGLPYRDSTEKAYSTDANIWGATHEAKTLEHLDTGIETVDPIMGVRFWDPSVEIATEDVTVGFEQGRPVSINGKEFASAVDLVMEANAIGGRHGLGMSDQIENRIIEAKSRGIYEAPGMALLHIVYERLVNAIHNEDTLAAYHNEGRRLGRLMYEGRWLDPQALMIRESLQRWVGTAVTGEVTLRLRRGEDYSILDTTGPAFSYHPDKLSMERTEDSAFGPVDRIGQLTMRNLDIADSRARLEQYVGLGLVGTPHPTPIGAAQAAATGLIGAMDEGGAEAIASRGEATDEETMLDRAAMESGTD</sequence>
<accession>Q06734</accession>
<name>ASSY_STRLA</name>
<gene>
    <name type="primary">argG</name>
</gene>
<keyword id="KW-0028">Amino-acid biosynthesis</keyword>
<keyword id="KW-0055">Arginine biosynthesis</keyword>
<keyword id="KW-0067">ATP-binding</keyword>
<keyword id="KW-0963">Cytoplasm</keyword>
<keyword id="KW-0903">Direct protein sequencing</keyword>
<keyword id="KW-0436">Ligase</keyword>
<keyword id="KW-0547">Nucleotide-binding</keyword>
<evidence type="ECO:0000250" key="1"/>
<evidence type="ECO:0000256" key="2">
    <source>
        <dbReference type="SAM" id="MobiDB-lite"/>
    </source>
</evidence>
<evidence type="ECO:0000269" key="3">
    <source>
    </source>
</evidence>
<evidence type="ECO:0000305" key="4"/>
<feature type="initiator methionine" description="Removed" evidence="3">
    <location>
        <position position="1"/>
    </location>
</feature>
<feature type="chain" id="PRO_0000148709" description="Argininosuccinate synthase">
    <location>
        <begin position="2"/>
        <end position="482"/>
    </location>
</feature>
<feature type="region of interest" description="Disordered" evidence="2">
    <location>
        <begin position="461"/>
        <end position="482"/>
    </location>
</feature>
<feature type="binding site" evidence="1">
    <location>
        <begin position="17"/>
        <end position="25"/>
    </location>
    <ligand>
        <name>ATP</name>
        <dbReference type="ChEBI" id="CHEBI:30616"/>
    </ligand>
</feature>
<feature type="binding site" evidence="1">
    <location>
        <position position="43"/>
    </location>
    <ligand>
        <name>ATP</name>
        <dbReference type="ChEBI" id="CHEBI:30616"/>
    </ligand>
</feature>
<feature type="binding site" evidence="1">
    <location>
        <position position="99"/>
    </location>
    <ligand>
        <name>L-citrulline</name>
        <dbReference type="ChEBI" id="CHEBI:57743"/>
    </ligand>
</feature>
<feature type="binding site" evidence="1">
    <location>
        <position position="129"/>
    </location>
    <ligand>
        <name>ATP</name>
        <dbReference type="ChEBI" id="CHEBI:30616"/>
    </ligand>
</feature>
<feature type="binding site" evidence="1">
    <location>
        <position position="131"/>
    </location>
    <ligand>
        <name>ATP</name>
        <dbReference type="ChEBI" id="CHEBI:30616"/>
    </ligand>
</feature>
<feature type="binding site" evidence="1">
    <location>
        <position position="131"/>
    </location>
    <ligand>
        <name>L-aspartate</name>
        <dbReference type="ChEBI" id="CHEBI:29991"/>
    </ligand>
</feature>
<feature type="binding site" evidence="1">
    <location>
        <position position="135"/>
    </location>
    <ligand>
        <name>L-aspartate</name>
        <dbReference type="ChEBI" id="CHEBI:29991"/>
    </ligand>
</feature>
<feature type="binding site" evidence="1">
    <location>
        <position position="135"/>
    </location>
    <ligand>
        <name>L-citrulline</name>
        <dbReference type="ChEBI" id="CHEBI:57743"/>
    </ligand>
</feature>
<feature type="binding site" evidence="1">
    <location>
        <position position="136"/>
    </location>
    <ligand>
        <name>ATP</name>
        <dbReference type="ChEBI" id="CHEBI:30616"/>
    </ligand>
</feature>
<feature type="binding site" evidence="1">
    <location>
        <position position="136"/>
    </location>
    <ligand>
        <name>L-aspartate</name>
        <dbReference type="ChEBI" id="CHEBI:29991"/>
    </ligand>
</feature>
<feature type="binding site" evidence="1">
    <location>
        <position position="139"/>
    </location>
    <ligand>
        <name>L-citrulline</name>
        <dbReference type="ChEBI" id="CHEBI:57743"/>
    </ligand>
</feature>
<feature type="binding site" evidence="1">
    <location>
        <position position="192"/>
    </location>
    <ligand>
        <name>L-citrulline</name>
        <dbReference type="ChEBI" id="CHEBI:57743"/>
    </ligand>
</feature>
<feature type="binding site" evidence="1">
    <location>
        <position position="194"/>
    </location>
    <ligand>
        <name>ATP</name>
        <dbReference type="ChEBI" id="CHEBI:30616"/>
    </ligand>
</feature>
<feature type="binding site" evidence="1">
    <location>
        <position position="201"/>
    </location>
    <ligand>
        <name>L-citrulline</name>
        <dbReference type="ChEBI" id="CHEBI:57743"/>
    </ligand>
</feature>
<feature type="binding site" evidence="1">
    <location>
        <position position="203"/>
    </location>
    <ligand>
        <name>L-citrulline</name>
        <dbReference type="ChEBI" id="CHEBI:57743"/>
    </ligand>
</feature>
<feature type="binding site" evidence="1">
    <location>
        <position position="280"/>
    </location>
    <ligand>
        <name>L-citrulline</name>
        <dbReference type="ChEBI" id="CHEBI:57743"/>
    </ligand>
</feature>
<organism>
    <name type="scientific">Streptomyces lavendulae</name>
    <dbReference type="NCBI Taxonomy" id="1914"/>
    <lineage>
        <taxon>Bacteria</taxon>
        <taxon>Bacillati</taxon>
        <taxon>Actinomycetota</taxon>
        <taxon>Actinomycetes</taxon>
        <taxon>Kitasatosporales</taxon>
        <taxon>Streptomycetaceae</taxon>
        <taxon>Streptomyces</taxon>
    </lineage>
</organism>
<proteinExistence type="evidence at protein level"/>
<reference key="1">
    <citation type="journal article" date="1993" name="Gene">
        <title>Cloning, sequence and expression of the argG gene from Streptomyces lavendulae.</title>
        <authorList>
            <person name="Ogawara H."/>
            <person name="Kasama H."/>
            <person name="Nashimoto K."/>
            <person name="Ohtsubo M."/>
            <person name="Higashi K."/>
            <person name="Urabe H."/>
        </authorList>
    </citation>
    <scope>NUCLEOTIDE SEQUENCE [GENOMIC DNA]</scope>
    <scope>PROTEIN SEQUENCE OF 2-10</scope>
    <source>
        <strain>ATCC 8664 / DSM 40213 / JCM 4055 / KCC S-0055 / NBRC 12789 / NCIMB 9840</strain>
    </source>
</reference>
<protein>
    <recommendedName>
        <fullName>Argininosuccinate synthase</fullName>
        <ecNumber>6.3.4.5</ecNumber>
    </recommendedName>
    <alternativeName>
        <fullName>Citrulline--aspartate ligase</fullName>
    </alternativeName>
</protein>